<organism>
    <name type="scientific">Mycoplana dimorpha</name>
    <dbReference type="NCBI Taxonomy" id="28320"/>
    <lineage>
        <taxon>Bacteria</taxon>
        <taxon>Pseudomonadati</taxon>
        <taxon>Pseudomonadota</taxon>
        <taxon>Alphaproteobacteria</taxon>
        <taxon>Hyphomicrobiales</taxon>
        <taxon>Rhizobiaceae</taxon>
        <taxon>Mycoplana</taxon>
    </lineage>
</organism>
<dbReference type="EC" id="7.1.3.1"/>
<dbReference type="EMBL" id="AH011173">
    <property type="protein sequence ID" value="AAL18698.1"/>
    <property type="molecule type" value="Genomic_DNA"/>
</dbReference>
<dbReference type="SMR" id="Q93AR9"/>
<dbReference type="GO" id="GO:0005886">
    <property type="term" value="C:plasma membrane"/>
    <property type="evidence" value="ECO:0007669"/>
    <property type="project" value="UniProtKB-SubCell"/>
</dbReference>
<dbReference type="GO" id="GO:0009678">
    <property type="term" value="F:diphosphate hydrolysis-driven proton transmembrane transporter activity"/>
    <property type="evidence" value="ECO:0007669"/>
    <property type="project" value="UniProtKB-EC"/>
</dbReference>
<dbReference type="GO" id="GO:0004427">
    <property type="term" value="F:inorganic diphosphate phosphatase activity"/>
    <property type="evidence" value="ECO:0007669"/>
    <property type="project" value="InterPro"/>
</dbReference>
<dbReference type="InterPro" id="IPR004131">
    <property type="entry name" value="PPase-energised_H-pump"/>
</dbReference>
<dbReference type="PANTHER" id="PTHR31998">
    <property type="entry name" value="K(+)-INSENSITIVE PYROPHOSPHATE-ENERGIZED PROTON PUMP"/>
    <property type="match status" value="1"/>
</dbReference>
<dbReference type="Pfam" id="PF03030">
    <property type="entry name" value="H_PPase"/>
    <property type="match status" value="1"/>
</dbReference>
<comment type="function">
    <text evidence="1">Proton pump that utilizes the energy of pyrophosphate hydrolysis as the driving force for proton movement across the membrane. Generates a proton motive force (By similarity).</text>
</comment>
<comment type="catalytic activity">
    <reaction>
        <text>diphosphate + H2O + H(+)(in) = 2 phosphate + 2 H(+)(out)</text>
        <dbReference type="Rhea" id="RHEA:13973"/>
        <dbReference type="ChEBI" id="CHEBI:15377"/>
        <dbReference type="ChEBI" id="CHEBI:15378"/>
        <dbReference type="ChEBI" id="CHEBI:33019"/>
        <dbReference type="ChEBI" id="CHEBI:43474"/>
        <dbReference type="EC" id="7.1.3.1"/>
    </reaction>
</comment>
<comment type="cofactor">
    <cofactor evidence="1">
        <name>Mg(2+)</name>
        <dbReference type="ChEBI" id="CHEBI:18420"/>
    </cofactor>
</comment>
<comment type="subunit">
    <text evidence="1">Homodimer.</text>
</comment>
<comment type="subcellular location">
    <subcellularLocation>
        <location evidence="1">Cell inner membrane</location>
        <topology evidence="1">Multi-pass membrane protein</topology>
    </subcellularLocation>
</comment>
<comment type="similarity">
    <text evidence="3">Belongs to the H(+)-translocating pyrophosphatase (TC 3.A.10) family.</text>
</comment>
<feature type="chain" id="PRO_0000217020" description="Pyrophosphate-energized proton pump 2">
    <location>
        <begin position="1" status="less than"/>
        <end position="208" status="greater than"/>
    </location>
</feature>
<feature type="transmembrane region" description="Helical" evidence="2">
    <location>
        <begin position="19"/>
        <end position="39"/>
    </location>
</feature>
<feature type="transmembrane region" description="Helical" evidence="2">
    <location>
        <begin position="54"/>
        <end position="74"/>
    </location>
</feature>
<feature type="transmembrane region" description="Helical" evidence="2">
    <location>
        <begin position="89"/>
        <end position="109"/>
    </location>
</feature>
<feature type="transmembrane region" description="Helical" evidence="2">
    <location>
        <begin position="140"/>
        <end position="160"/>
    </location>
</feature>
<feature type="transmembrane region" description="Helical" evidence="2">
    <location>
        <begin position="167"/>
        <end position="187"/>
    </location>
</feature>
<feature type="non-terminal residue">
    <location>
        <position position="1"/>
    </location>
</feature>
<feature type="non-terminal residue">
    <location>
        <position position="208"/>
    </location>
</feature>
<accession>Q93AR9</accession>
<gene>
    <name type="primary">hppA2</name>
</gene>
<proteinExistence type="inferred from homology"/>
<keyword id="KW-0997">Cell inner membrane</keyword>
<keyword id="KW-1003">Cell membrane</keyword>
<keyword id="KW-0375">Hydrogen ion transport</keyword>
<keyword id="KW-0406">Ion transport</keyword>
<keyword id="KW-0460">Magnesium</keyword>
<keyword id="KW-0472">Membrane</keyword>
<keyword id="KW-1278">Translocase</keyword>
<keyword id="KW-0812">Transmembrane</keyword>
<keyword id="KW-1133">Transmembrane helix</keyword>
<keyword id="KW-0813">Transport</keyword>
<protein>
    <recommendedName>
        <fullName>Pyrophosphate-energized proton pump 2</fullName>
        <ecNumber>7.1.3.1</ecNumber>
    </recommendedName>
    <alternativeName>
        <fullName>Membrane-bound proton-translocating pyrophosphatase 2</fullName>
    </alternativeName>
    <alternativeName>
        <fullName>Pyrophosphate-energized inorganic pyrophosphatase 2</fullName>
        <shortName>H(+)-PPase 2</shortName>
    </alternativeName>
</protein>
<reference key="1">
    <citation type="submission" date="2001-09" db="EMBL/GenBank/DDBJ databases">
        <title>High prevalence of the H+-proton-pumping inorganic pyrophosphatase gene in alpha proteobacteria and evidence of lateral transfer in its phylogeny.</title>
        <authorList>
            <person name="Jumas-Bilak E."/>
            <person name="Michaux-Charachon S."/>
            <person name="Teyssier C."/>
        </authorList>
    </citation>
    <scope>NUCLEOTIDE SEQUENCE [GENOMIC DNA]</scope>
    <source>
        <strain>ATCC 4279 / DSM 7138 / JCM 20847 / NBRC 13291 / NCIMB 9439 / NRRL B-1091</strain>
    </source>
</reference>
<name>HPPA2_MYCDI</name>
<sequence length="208" mass="20704">MVLAAIFFGGTPILATAMAYPLAICAACVITSIIGTFFVKLGTNNSIMGALYKGLIVTGALSILGLGAATSFTIGWGSIGTVGGIEVRGGNLFVCGLIGLVVTALIVVITEYYTGTNKRPVNSIAQASVTGHGTNVIQGLAVSLESTALPAIVIVGGIIATYQLAGLFGTAIAVTAMLGLAGMIVALDAFGPVTDNAGGIAEMSHLSP</sequence>
<evidence type="ECO:0000250" key="1"/>
<evidence type="ECO:0000255" key="2"/>
<evidence type="ECO:0000305" key="3"/>